<accession>Q62095</accession>
<accession>Q9QWS9</accession>
<gene>
    <name type="primary">Ddx3y</name>
    <name type="synonym">D1Pas1-rs1</name>
    <name type="synonym">Dead2</name>
</gene>
<evidence type="ECO:0000250" key="1">
    <source>
        <dbReference type="UniProtKB" id="O00571"/>
    </source>
</evidence>
<evidence type="ECO:0000250" key="2">
    <source>
        <dbReference type="UniProtKB" id="Q62167"/>
    </source>
</evidence>
<evidence type="ECO:0000255" key="3">
    <source>
        <dbReference type="PROSITE-ProRule" id="PRU00541"/>
    </source>
</evidence>
<evidence type="ECO:0000255" key="4">
    <source>
        <dbReference type="PROSITE-ProRule" id="PRU00542"/>
    </source>
</evidence>
<evidence type="ECO:0000256" key="5">
    <source>
        <dbReference type="SAM" id="MobiDB-lite"/>
    </source>
</evidence>
<evidence type="ECO:0000269" key="6">
    <source>
    </source>
</evidence>
<evidence type="ECO:0000269" key="7">
    <source>
    </source>
</evidence>
<evidence type="ECO:0000269" key="8">
    <source>
    </source>
</evidence>
<evidence type="ECO:0000269" key="9">
    <source>
    </source>
</evidence>
<evidence type="ECO:0000305" key="10"/>
<evidence type="ECO:0007744" key="11">
    <source>
    </source>
</evidence>
<comment type="function">
    <text evidence="7">Probable ATP-dependent RNA helicase. During immune response, may enhance IFNB1 expression via IRF3/IRF7 pathway (PubMed:30475900).</text>
</comment>
<comment type="catalytic activity">
    <reaction>
        <text>ATP + H2O = ADP + phosphate + H(+)</text>
        <dbReference type="Rhea" id="RHEA:13065"/>
        <dbReference type="ChEBI" id="CHEBI:15377"/>
        <dbReference type="ChEBI" id="CHEBI:15378"/>
        <dbReference type="ChEBI" id="CHEBI:30616"/>
        <dbReference type="ChEBI" id="CHEBI:43474"/>
        <dbReference type="ChEBI" id="CHEBI:456216"/>
        <dbReference type="EC" id="3.6.4.13"/>
    </reaction>
</comment>
<comment type="subcellular location">
    <subcellularLocation>
        <location evidence="6">Cytoplasm</location>
    </subcellularLocation>
    <subcellularLocation>
        <location evidence="6">Nucleus</location>
    </subcellularLocation>
    <text>Shuttles between the nucleus and the cytoplasm in an XPO1-dependent manner.</text>
</comment>
<comment type="tissue specificity">
    <text evidence="6 9">Found in heart, brain, liver, skeletal muscle, kidney and testis. Low expression detected in lung. In testis, expressed in all types of spermatogenic cells including spermatogonia, spermatocytes, spermatids and somatic Sertoli cells within the seminiferous tubules. Also expressed in Leydig cells and other interstitial cells.</text>
</comment>
<comment type="disruption phenotype">
    <text evidence="8">Knockout males show normal spermatogenesis, produce morphologically normal spermatozoa and sire healthy offspring (PubMed:30613052). DDX3X and DDX3Y double knockout is embryonic lethal (PubMed:30613052). DDX3X and DDX3Y double knockout germ cells can differentiate into spermatozoa (PubMed:30613052).</text>
</comment>
<comment type="similarity">
    <text evidence="10">Belongs to the DEAD box helicase family. DDX3/DED1 subfamily.</text>
</comment>
<dbReference type="EC" id="3.6.4.13"/>
<dbReference type="EMBL" id="AJ007376">
    <property type="protein sequence ID" value="CAA07483.1"/>
    <property type="molecule type" value="mRNA"/>
</dbReference>
<dbReference type="EMBL" id="BC021453">
    <property type="protein sequence ID" value="AAH21453.1"/>
    <property type="molecule type" value="mRNA"/>
</dbReference>
<dbReference type="EMBL" id="L25337">
    <property type="protein sequence ID" value="AAA53631.1"/>
    <property type="molecule type" value="mRNA"/>
</dbReference>
<dbReference type="CCDS" id="CCDS30543.1"/>
<dbReference type="RefSeq" id="NP_036138.1">
    <property type="nucleotide sequence ID" value="NM_012008.2"/>
</dbReference>
<dbReference type="SMR" id="Q62095"/>
<dbReference type="BioGRID" id="205050">
    <property type="interactions" value="11"/>
</dbReference>
<dbReference type="ELM" id="Q62095"/>
<dbReference type="FunCoup" id="Q62095">
    <property type="interactions" value="1037"/>
</dbReference>
<dbReference type="IntAct" id="Q62095">
    <property type="interactions" value="1"/>
</dbReference>
<dbReference type="MINT" id="Q62095"/>
<dbReference type="STRING" id="10090.ENSMUSP00000088729"/>
<dbReference type="GlyGen" id="Q62095">
    <property type="glycosylation" value="1 site, 1 O-linked glycan (1 site)"/>
</dbReference>
<dbReference type="iPTMnet" id="Q62095"/>
<dbReference type="PhosphoSitePlus" id="Q62095"/>
<dbReference type="SwissPalm" id="Q62095"/>
<dbReference type="jPOST" id="Q62095"/>
<dbReference type="PaxDb" id="10090-ENSMUSP00000088729"/>
<dbReference type="ProteomicsDB" id="279902"/>
<dbReference type="Pumba" id="Q62095"/>
<dbReference type="Antibodypedia" id="5485">
    <property type="antibodies" value="228 antibodies from 31 providers"/>
</dbReference>
<dbReference type="DNASU" id="26900"/>
<dbReference type="Ensembl" id="ENSMUST00000091190.12">
    <property type="protein sequence ID" value="ENSMUSP00000088729.6"/>
    <property type="gene ID" value="ENSMUSG00000069045.12"/>
</dbReference>
<dbReference type="GeneID" id="26900"/>
<dbReference type="KEGG" id="mmu:26900"/>
<dbReference type="UCSC" id="uc009uzm.2">
    <property type="organism name" value="mouse"/>
</dbReference>
<dbReference type="AGR" id="MGI:1349406"/>
<dbReference type="CTD" id="8653"/>
<dbReference type="MGI" id="MGI:1349406">
    <property type="gene designation" value="Ddx3y"/>
</dbReference>
<dbReference type="VEuPathDB" id="HostDB:ENSMUSG00000069045"/>
<dbReference type="eggNOG" id="KOG0335">
    <property type="taxonomic scope" value="Eukaryota"/>
</dbReference>
<dbReference type="GeneTree" id="ENSGT00940000154443"/>
<dbReference type="HOGENOM" id="CLU_003041_16_3_1"/>
<dbReference type="InParanoid" id="Q62095"/>
<dbReference type="OMA" id="SYAGMQP"/>
<dbReference type="OrthoDB" id="196131at2759"/>
<dbReference type="PhylomeDB" id="Q62095"/>
<dbReference type="TreeFam" id="TF300364"/>
<dbReference type="BioGRID-ORCS" id="26900">
    <property type="hits" value="1 hit in 76 CRISPR screens"/>
</dbReference>
<dbReference type="ChiTaRS" id="Ddx3y">
    <property type="organism name" value="mouse"/>
</dbReference>
<dbReference type="PRO" id="PR:Q62095"/>
<dbReference type="Proteomes" id="UP000000589">
    <property type="component" value="Chromosome Y"/>
</dbReference>
<dbReference type="RNAct" id="Q62095">
    <property type="molecule type" value="protein"/>
</dbReference>
<dbReference type="Bgee" id="ENSMUSG00000069045">
    <property type="expression patterns" value="Expressed in median eminence of neurohypophysis and 228 other cell types or tissues"/>
</dbReference>
<dbReference type="ExpressionAtlas" id="Q62095">
    <property type="expression patterns" value="baseline and differential"/>
</dbReference>
<dbReference type="GO" id="GO:0005829">
    <property type="term" value="C:cytosol"/>
    <property type="evidence" value="ECO:0007669"/>
    <property type="project" value="Ensembl"/>
</dbReference>
<dbReference type="GO" id="GO:0005634">
    <property type="term" value="C:nucleus"/>
    <property type="evidence" value="ECO:0007669"/>
    <property type="project" value="UniProtKB-SubCell"/>
</dbReference>
<dbReference type="GO" id="GO:0005524">
    <property type="term" value="F:ATP binding"/>
    <property type="evidence" value="ECO:0007669"/>
    <property type="project" value="UniProtKB-KW"/>
</dbReference>
<dbReference type="GO" id="GO:0016887">
    <property type="term" value="F:ATP hydrolysis activity"/>
    <property type="evidence" value="ECO:0007669"/>
    <property type="project" value="RHEA"/>
</dbReference>
<dbReference type="GO" id="GO:0003723">
    <property type="term" value="F:RNA binding"/>
    <property type="evidence" value="ECO:0007669"/>
    <property type="project" value="UniProtKB-KW"/>
</dbReference>
<dbReference type="GO" id="GO:0003724">
    <property type="term" value="F:RNA helicase activity"/>
    <property type="evidence" value="ECO:0007669"/>
    <property type="project" value="UniProtKB-EC"/>
</dbReference>
<dbReference type="CDD" id="cd18051">
    <property type="entry name" value="DEADc_DDX3"/>
    <property type="match status" value="1"/>
</dbReference>
<dbReference type="CDD" id="cd18787">
    <property type="entry name" value="SF2_C_DEAD"/>
    <property type="match status" value="1"/>
</dbReference>
<dbReference type="FunFam" id="3.40.50.300:FF:000160">
    <property type="entry name" value="ATP-dependent RNA helicase DDX3X"/>
    <property type="match status" value="1"/>
</dbReference>
<dbReference type="FunFam" id="3.40.50.300:FF:000008">
    <property type="entry name" value="ATP-dependent RNA helicase RhlB"/>
    <property type="match status" value="1"/>
</dbReference>
<dbReference type="Gene3D" id="3.40.50.300">
    <property type="entry name" value="P-loop containing nucleotide triphosphate hydrolases"/>
    <property type="match status" value="2"/>
</dbReference>
<dbReference type="InterPro" id="IPR011545">
    <property type="entry name" value="DEAD/DEAH_box_helicase_dom"/>
</dbReference>
<dbReference type="InterPro" id="IPR014001">
    <property type="entry name" value="Helicase_ATP-bd"/>
</dbReference>
<dbReference type="InterPro" id="IPR001650">
    <property type="entry name" value="Helicase_C-like"/>
</dbReference>
<dbReference type="InterPro" id="IPR027417">
    <property type="entry name" value="P-loop_NTPase"/>
</dbReference>
<dbReference type="InterPro" id="IPR000629">
    <property type="entry name" value="RNA-helicase_DEAD-box_CS"/>
</dbReference>
<dbReference type="InterPro" id="IPR014014">
    <property type="entry name" value="RNA_helicase_DEAD_Q_motif"/>
</dbReference>
<dbReference type="PANTHER" id="PTHR47958">
    <property type="entry name" value="ATP-DEPENDENT RNA HELICASE DBP3"/>
    <property type="match status" value="1"/>
</dbReference>
<dbReference type="Pfam" id="PF00270">
    <property type="entry name" value="DEAD"/>
    <property type="match status" value="1"/>
</dbReference>
<dbReference type="Pfam" id="PF00271">
    <property type="entry name" value="Helicase_C"/>
    <property type="match status" value="1"/>
</dbReference>
<dbReference type="SMART" id="SM00487">
    <property type="entry name" value="DEXDc"/>
    <property type="match status" value="1"/>
</dbReference>
<dbReference type="SMART" id="SM00490">
    <property type="entry name" value="HELICc"/>
    <property type="match status" value="1"/>
</dbReference>
<dbReference type="SUPFAM" id="SSF52540">
    <property type="entry name" value="P-loop containing nucleoside triphosphate hydrolases"/>
    <property type="match status" value="1"/>
</dbReference>
<dbReference type="PROSITE" id="PS00039">
    <property type="entry name" value="DEAD_ATP_HELICASE"/>
    <property type="match status" value="1"/>
</dbReference>
<dbReference type="PROSITE" id="PS51192">
    <property type="entry name" value="HELICASE_ATP_BIND_1"/>
    <property type="match status" value="1"/>
</dbReference>
<dbReference type="PROSITE" id="PS51194">
    <property type="entry name" value="HELICASE_CTER"/>
    <property type="match status" value="1"/>
</dbReference>
<dbReference type="PROSITE" id="PS51195">
    <property type="entry name" value="Q_MOTIF"/>
    <property type="match status" value="1"/>
</dbReference>
<proteinExistence type="evidence at protein level"/>
<keyword id="KW-0007">Acetylation</keyword>
<keyword id="KW-0067">ATP-binding</keyword>
<keyword id="KW-0963">Cytoplasm</keyword>
<keyword id="KW-0903">Direct protein sequencing</keyword>
<keyword id="KW-0347">Helicase</keyword>
<keyword id="KW-0378">Hydrolase</keyword>
<keyword id="KW-1017">Isopeptide bond</keyword>
<keyword id="KW-0488">Methylation</keyword>
<keyword id="KW-0547">Nucleotide-binding</keyword>
<keyword id="KW-0539">Nucleus</keyword>
<keyword id="KW-0597">Phosphoprotein</keyword>
<keyword id="KW-1185">Reference proteome</keyword>
<keyword id="KW-0694">RNA-binding</keyword>
<keyword id="KW-0832">Ubl conjugation</keyword>
<name>DDX3Y_MOUSE</name>
<sequence>MSQVAAESTAGLDQQFVGLDLKSSDNQNGGGNTESKGRYIPPHLRNRETSKGVCDKDSSGWSCSKDKDAYSSFGSRDSRGKPNYFSDRGSGSRGRFDDHGRNDYDGIGGRDRTGFGKFERSGHSRWSDRSDEDDWSKPLPPSERLEQELFSGGNTGINFEKYDDIPVEATGNNCPPHIENFSDIEMGEIIMGNIELTRYTRPTPVQKHAIPIIKEKRDLMACAQTGSGKTAAFLLPILSQIYTDGPGEALKAMKENGRYGRRKQYPISLVLAPTRELAVQIYEEARKFSYRSRVRPCVVYGGADTVQQIRDLERGCHLLVATPGRLVDMMERGKIGLDFCKYLVLDEADRMLDMGFEPQIRRIVEQDTMPPKGVRHTMMFSATFPKEIQMLARDFLDEYIFLAVGRVGSTSENITQKVVWVEELDKRSFLLDLLNATGKDSLTLVFVETKKGADSLENFLFQERYACTSIHGDRSQKDREEALHQFRSGRKPILVATAVAARGLDISNVKHVINFDLPSDIEEYVHRIGRTGRVGNLGLATSFFNERNLNITKDLLDLLVEAKQEVPSWLESMAYEHHYKGSSRGRSKSRFSGGFGARDYRQSSGSANAGFNSNRANSSRSSGSSHNRGFGGGGYGGFYNNDGYGGNYNSQAVDWWGN</sequence>
<reference key="1">
    <citation type="journal article" date="1998" name="Hum. Mol. Genet.">
        <title>The mouse Y chromosome interval necessary for spermatogonial proliferation is gene dense with syntenic homology to the human AZFa region.</title>
        <authorList>
            <person name="Mazeyrat S."/>
            <person name="Saut N."/>
            <person name="Sargent C.A."/>
            <person name="Grimmond S."/>
            <person name="Longepied G."/>
            <person name="Ehrmann I.E."/>
            <person name="Ellis P.S."/>
            <person name="Greenfield A."/>
            <person name="Affara N.A."/>
            <person name="Mitchell M.J."/>
        </authorList>
    </citation>
    <scope>NUCLEOTIDE SEQUENCE [MRNA]</scope>
    <source>
        <strain>C57BL/6J</strain>
        <tissue>Testis</tissue>
    </source>
</reference>
<reference key="2">
    <citation type="journal article" date="2004" name="Genome Res.">
        <title>The status, quality, and expansion of the NIH full-length cDNA project: the Mammalian Gene Collection (MGC).</title>
        <authorList>
            <consortium name="The MGC Project Team"/>
        </authorList>
    </citation>
    <scope>NUCLEOTIDE SEQUENCE [LARGE SCALE MRNA]</scope>
    <source>
        <strain>FVB/N</strain>
        <tissue>Kidney</tissue>
    </source>
</reference>
<reference key="3">
    <citation type="journal article" date="1994" name="Gene">
        <title>Mouse erythroid cells express multiple putative RNA helicase genes exhibiting high sequence conservation from yeast to mammals.</title>
        <authorList>
            <person name="Gee S.L."/>
            <person name="Conboy J.G."/>
        </authorList>
    </citation>
    <scope>NUCLEOTIDE SEQUENCE [MRNA] OF 283-527</scope>
    <scope>TISSUE SPECIFICITY</scope>
    <source>
        <tissue>Erythroleukemia</tissue>
    </source>
</reference>
<reference key="4">
    <citation type="submission" date="2007-07" db="UniProtKB">
        <authorList>
            <person name="Lubec G."/>
            <person name="Yang J.W."/>
            <person name="Zigmond M."/>
        </authorList>
    </citation>
    <scope>PROTEIN SEQUENCE OF 428-439</scope>
    <source>
        <tissue>Brain</tissue>
    </source>
</reference>
<reference key="5">
    <citation type="journal article" date="2004" name="Exp. Cell Res.">
        <title>Human DDX3Y, the Y-encoded isoform of RNA helicase DDX3, rescues a hamster temperature-sensitive ET24 mutant cell line with a DDX3X mutation.</title>
        <authorList>
            <person name="Sekiguchi T."/>
            <person name="Iida H."/>
            <person name="Fukumura J."/>
            <person name="Nishimoto T."/>
        </authorList>
    </citation>
    <scope>SUBCELLULAR LOCATION</scope>
    <scope>TISSUE SPECIFICITY</scope>
</reference>
<reference key="6">
    <citation type="journal article" date="2010" name="Cell">
        <title>A tissue-specific atlas of mouse protein phosphorylation and expression.</title>
        <authorList>
            <person name="Huttlin E.L."/>
            <person name="Jedrychowski M.P."/>
            <person name="Elias J.E."/>
            <person name="Goswami T."/>
            <person name="Rad R."/>
            <person name="Beausoleil S.A."/>
            <person name="Villen J."/>
            <person name="Haas W."/>
            <person name="Sowa M.E."/>
            <person name="Gygi S.P."/>
        </authorList>
    </citation>
    <scope>PHOSPHORYLATION [LARGE SCALE ANALYSIS] AT SER-455</scope>
    <scope>IDENTIFICATION BY MASS SPECTROMETRY [LARGE SCALE ANALYSIS]</scope>
    <source>
        <tissue>Kidney</tissue>
        <tissue>Liver</tissue>
        <tissue>Pancreas</tissue>
    </source>
</reference>
<reference key="7">
    <citation type="journal article" date="2018" name="PLoS Pathog.">
        <title>The RNA helicase DDX3X is an essential mediator of innate antimicrobial immunity.</title>
        <authorList>
            <person name="Szappanos D."/>
            <person name="Tschismarov R."/>
            <person name="Perlot T."/>
            <person name="Westermayer S."/>
            <person name="Fischer K."/>
            <person name="Platanitis E."/>
            <person name="Kallinger F."/>
            <person name="Novatchkova M."/>
            <person name="Lassnig C."/>
            <person name="Mueller M."/>
            <person name="Sexl V."/>
            <person name="Bennett K.L."/>
            <person name="Foong-Sobis M."/>
            <person name="Penninger J.M."/>
            <person name="Decker T."/>
        </authorList>
    </citation>
    <scope>FUNCTION</scope>
</reference>
<reference key="8">
    <citation type="journal article" date="2019" name="J. Reprod. Dev.">
        <title>An azoospermic factor gene, Ddx3y and its paralog, Ddx3x are dispensable in germ cells for male fertility.</title>
        <authorList>
            <person name="Matsumura T."/>
            <person name="Endo T."/>
            <person name="Isotani A."/>
            <person name="Ogawa M."/>
            <person name="Ikawa M."/>
        </authorList>
    </citation>
    <scope>DISRUPTION PHENOTYPE</scope>
</reference>
<feature type="initiator methionine" description="Removed" evidence="1">
    <location>
        <position position="1"/>
    </location>
</feature>
<feature type="chain" id="PRO_0000055012" description="ATP-dependent RNA helicase DDX3Y">
    <location>
        <begin position="2"/>
        <end position="658"/>
    </location>
</feature>
<feature type="domain" description="Helicase ATP-binding" evidence="3">
    <location>
        <begin position="210"/>
        <end position="402"/>
    </location>
</feature>
<feature type="domain" description="Helicase C-terminal" evidence="4">
    <location>
        <begin position="413"/>
        <end position="574"/>
    </location>
</feature>
<feature type="region of interest" description="Disordered" evidence="5">
    <location>
        <begin position="1"/>
        <end position="143"/>
    </location>
</feature>
<feature type="region of interest" description="Disordered" evidence="5">
    <location>
        <begin position="597"/>
        <end position="627"/>
    </location>
</feature>
<feature type="short sequence motif" description="Q motif">
    <location>
        <begin position="179"/>
        <end position="207"/>
    </location>
</feature>
<feature type="short sequence motif" description="DEAD box">
    <location>
        <begin position="346"/>
        <end position="349"/>
    </location>
</feature>
<feature type="compositionally biased region" description="Basic and acidic residues" evidence="5">
    <location>
        <begin position="45"/>
        <end position="69"/>
    </location>
</feature>
<feature type="compositionally biased region" description="Basic and acidic residues" evidence="5">
    <location>
        <begin position="94"/>
        <end position="129"/>
    </location>
</feature>
<feature type="compositionally biased region" description="Low complexity" evidence="5">
    <location>
        <begin position="603"/>
        <end position="627"/>
    </location>
</feature>
<feature type="binding site" evidence="3">
    <location>
        <begin position="199"/>
        <end position="206"/>
    </location>
    <ligand>
        <name>ATP</name>
        <dbReference type="ChEBI" id="CHEBI:30616"/>
    </ligand>
</feature>
<feature type="binding site" evidence="3">
    <location>
        <begin position="223"/>
        <end position="230"/>
    </location>
    <ligand>
        <name>ATP</name>
        <dbReference type="ChEBI" id="CHEBI:30616"/>
    </ligand>
</feature>
<feature type="modified residue" description="N-acetylserine" evidence="1">
    <location>
        <position position="2"/>
    </location>
</feature>
<feature type="modified residue" description="N6-acetyllysine" evidence="2">
    <location>
        <position position="56"/>
    </location>
</feature>
<feature type="modified residue" description="Phosphoserine" evidence="1">
    <location>
        <position position="86"/>
    </location>
</feature>
<feature type="modified residue" description="Phosphoserine" evidence="1">
    <location>
        <position position="90"/>
    </location>
</feature>
<feature type="modified residue" description="Omega-N-methylarginine" evidence="2">
    <location>
        <position position="101"/>
    </location>
</feature>
<feature type="modified residue" description="Phosphotyrosine" evidence="2">
    <location>
        <position position="104"/>
    </location>
</feature>
<feature type="modified residue" description="Omega-N-methylarginine" evidence="2">
    <location>
        <position position="110"/>
    </location>
</feature>
<feature type="modified residue" description="N6-acetyllysine" evidence="1">
    <location>
        <position position="117"/>
    </location>
</feature>
<feature type="modified residue" description="Phosphoserine" evidence="1">
    <location>
        <position position="130"/>
    </location>
</feature>
<feature type="modified residue" description="Phosphoserine" evidence="1">
    <location>
        <position position="182"/>
    </location>
</feature>
<feature type="modified residue" description="Phosphoserine" evidence="11">
    <location>
        <position position="455"/>
    </location>
</feature>
<feature type="modified residue" description="Omega-N-methylarginine" evidence="1">
    <location>
        <position position="590"/>
    </location>
</feature>
<feature type="modified residue" description="Phosphoserine" evidence="1">
    <location>
        <position position="592"/>
    </location>
</feature>
<feature type="modified residue" description="Phosphoserine" evidence="1">
    <location>
        <position position="603"/>
    </location>
</feature>
<feature type="modified residue" description="Omega-N-methylarginine" evidence="1">
    <location>
        <position position="615"/>
    </location>
</feature>
<feature type="modified residue" description="Omega-N-methylarginine" evidence="1">
    <location>
        <position position="628"/>
    </location>
</feature>
<feature type="cross-link" description="Glycyl lysine isopeptide (Lys-Gly) (interchain with G-Cter in SUMO2)" evidence="1">
    <location>
        <position position="214"/>
    </location>
</feature>
<feature type="sequence conflict" description="In Ref. 3; AAA53631." evidence="10" ref="3">
    <original>R</original>
    <variation>S</variation>
    <location>
        <position position="527"/>
    </location>
</feature>
<organism>
    <name type="scientific">Mus musculus</name>
    <name type="common">Mouse</name>
    <dbReference type="NCBI Taxonomy" id="10090"/>
    <lineage>
        <taxon>Eukaryota</taxon>
        <taxon>Metazoa</taxon>
        <taxon>Chordata</taxon>
        <taxon>Craniata</taxon>
        <taxon>Vertebrata</taxon>
        <taxon>Euteleostomi</taxon>
        <taxon>Mammalia</taxon>
        <taxon>Eutheria</taxon>
        <taxon>Euarchontoglires</taxon>
        <taxon>Glires</taxon>
        <taxon>Rodentia</taxon>
        <taxon>Myomorpha</taxon>
        <taxon>Muroidea</taxon>
        <taxon>Muridae</taxon>
        <taxon>Murinae</taxon>
        <taxon>Mus</taxon>
        <taxon>Mus</taxon>
    </lineage>
</organism>
<protein>
    <recommendedName>
        <fullName>ATP-dependent RNA helicase DDX3Y</fullName>
        <ecNumber>3.6.4.13</ecNumber>
    </recommendedName>
    <alternativeName>
        <fullName>D1Pas1-related sequence 1</fullName>
    </alternativeName>
    <alternativeName>
        <fullName>DEAD box protein 3, Y-chromosomal</fullName>
    </alternativeName>
    <alternativeName>
        <fullName>DEAD-box RNA helicase DEAD2</fullName>
        <shortName>mDEAD2</shortName>
    </alternativeName>
</protein>